<proteinExistence type="inferred from homology"/>
<feature type="chain" id="PRO_1000126342" description="Probable transaldolase">
    <location>
        <begin position="1"/>
        <end position="221"/>
    </location>
</feature>
<feature type="active site" description="Schiff-base intermediate with substrate" evidence="1">
    <location>
        <position position="83"/>
    </location>
</feature>
<sequence>MEIFLDTANIEEIRKGVAWGIVDGVTTNPTLVSKENAVFEERIKEICETVEGPVSAEVVSTDYEGMVKEAREIANLSEFVVVKIPLIPDGIKAIKTLSKEGIKTNATLVFSPLQALLAAKAGATYVSPFIGRMDDIGNTGMDIVEEIEVIFSNYGYETKIIVASVRHPQHVLEAGLIGADVVTMPFEVLEKMFKHPMTDIGLERFLNDWKKYQDYLKSKNN</sequence>
<keyword id="KW-0963">Cytoplasm</keyword>
<keyword id="KW-0570">Pentose shunt</keyword>
<keyword id="KW-0704">Schiff base</keyword>
<keyword id="KW-0808">Transferase</keyword>
<name>TAL_PETMO</name>
<gene>
    <name evidence="1" type="primary">tal</name>
    <name type="ordered locus">Pmob_1161</name>
</gene>
<dbReference type="EC" id="2.2.1.2" evidence="1"/>
<dbReference type="EMBL" id="CP000879">
    <property type="protein sequence ID" value="ABX31879.1"/>
    <property type="molecule type" value="Genomic_DNA"/>
</dbReference>
<dbReference type="SMR" id="A9BHK7"/>
<dbReference type="STRING" id="403833.Pmob_1161"/>
<dbReference type="KEGG" id="pmo:Pmob_1161"/>
<dbReference type="eggNOG" id="COG0176">
    <property type="taxonomic scope" value="Bacteria"/>
</dbReference>
<dbReference type="HOGENOM" id="CLU_079764_0_0_0"/>
<dbReference type="OrthoDB" id="9807051at2"/>
<dbReference type="UniPathway" id="UPA00115">
    <property type="reaction ID" value="UER00414"/>
</dbReference>
<dbReference type="Proteomes" id="UP000000789">
    <property type="component" value="Chromosome"/>
</dbReference>
<dbReference type="GO" id="GO:0005737">
    <property type="term" value="C:cytoplasm"/>
    <property type="evidence" value="ECO:0007669"/>
    <property type="project" value="UniProtKB-SubCell"/>
</dbReference>
<dbReference type="GO" id="GO:0016832">
    <property type="term" value="F:aldehyde-lyase activity"/>
    <property type="evidence" value="ECO:0007669"/>
    <property type="project" value="InterPro"/>
</dbReference>
<dbReference type="GO" id="GO:0004801">
    <property type="term" value="F:transaldolase activity"/>
    <property type="evidence" value="ECO:0007669"/>
    <property type="project" value="UniProtKB-UniRule"/>
</dbReference>
<dbReference type="GO" id="GO:0005975">
    <property type="term" value="P:carbohydrate metabolic process"/>
    <property type="evidence" value="ECO:0007669"/>
    <property type="project" value="InterPro"/>
</dbReference>
<dbReference type="GO" id="GO:0006098">
    <property type="term" value="P:pentose-phosphate shunt"/>
    <property type="evidence" value="ECO:0007669"/>
    <property type="project" value="UniProtKB-UniRule"/>
</dbReference>
<dbReference type="CDD" id="cd00956">
    <property type="entry name" value="Transaldolase_FSA"/>
    <property type="match status" value="1"/>
</dbReference>
<dbReference type="FunFam" id="3.20.20.70:FF:000018">
    <property type="entry name" value="Probable transaldolase"/>
    <property type="match status" value="1"/>
</dbReference>
<dbReference type="Gene3D" id="3.20.20.70">
    <property type="entry name" value="Aldolase class I"/>
    <property type="match status" value="1"/>
</dbReference>
<dbReference type="HAMAP" id="MF_00494">
    <property type="entry name" value="Transaldolase_3b"/>
    <property type="match status" value="1"/>
</dbReference>
<dbReference type="InterPro" id="IPR013785">
    <property type="entry name" value="Aldolase_TIM"/>
</dbReference>
<dbReference type="InterPro" id="IPR001585">
    <property type="entry name" value="TAL/FSA"/>
</dbReference>
<dbReference type="InterPro" id="IPR022999">
    <property type="entry name" value="Transaldolase_3B"/>
</dbReference>
<dbReference type="InterPro" id="IPR004731">
    <property type="entry name" value="Transaldolase_3B/F6P_aldolase"/>
</dbReference>
<dbReference type="InterPro" id="IPR018225">
    <property type="entry name" value="Transaldolase_AS"/>
</dbReference>
<dbReference type="InterPro" id="IPR033919">
    <property type="entry name" value="TSA/FSA_arc/bac"/>
</dbReference>
<dbReference type="NCBIfam" id="TIGR00875">
    <property type="entry name" value="fsa_talC_mipB"/>
    <property type="match status" value="1"/>
</dbReference>
<dbReference type="PANTHER" id="PTHR10683:SF40">
    <property type="entry name" value="FRUCTOSE-6-PHOSPHATE ALDOLASE 1-RELATED"/>
    <property type="match status" value="1"/>
</dbReference>
<dbReference type="PANTHER" id="PTHR10683">
    <property type="entry name" value="TRANSALDOLASE"/>
    <property type="match status" value="1"/>
</dbReference>
<dbReference type="Pfam" id="PF00923">
    <property type="entry name" value="TAL_FSA"/>
    <property type="match status" value="1"/>
</dbReference>
<dbReference type="SUPFAM" id="SSF51569">
    <property type="entry name" value="Aldolase"/>
    <property type="match status" value="1"/>
</dbReference>
<dbReference type="PROSITE" id="PS01054">
    <property type="entry name" value="TRANSALDOLASE_1"/>
    <property type="match status" value="1"/>
</dbReference>
<protein>
    <recommendedName>
        <fullName evidence="1">Probable transaldolase</fullName>
        <ecNumber evidence="1">2.2.1.2</ecNumber>
    </recommendedName>
</protein>
<organism>
    <name type="scientific">Petrotoga mobilis (strain DSM 10674 / SJ95)</name>
    <dbReference type="NCBI Taxonomy" id="403833"/>
    <lineage>
        <taxon>Bacteria</taxon>
        <taxon>Thermotogati</taxon>
        <taxon>Thermotogota</taxon>
        <taxon>Thermotogae</taxon>
        <taxon>Petrotogales</taxon>
        <taxon>Petrotogaceae</taxon>
        <taxon>Petrotoga</taxon>
    </lineage>
</organism>
<comment type="function">
    <text evidence="1">Transaldolase is important for the balance of metabolites in the pentose-phosphate pathway.</text>
</comment>
<comment type="catalytic activity">
    <reaction evidence="1">
        <text>D-sedoheptulose 7-phosphate + D-glyceraldehyde 3-phosphate = D-erythrose 4-phosphate + beta-D-fructose 6-phosphate</text>
        <dbReference type="Rhea" id="RHEA:17053"/>
        <dbReference type="ChEBI" id="CHEBI:16897"/>
        <dbReference type="ChEBI" id="CHEBI:57483"/>
        <dbReference type="ChEBI" id="CHEBI:57634"/>
        <dbReference type="ChEBI" id="CHEBI:59776"/>
        <dbReference type="EC" id="2.2.1.2"/>
    </reaction>
</comment>
<comment type="pathway">
    <text evidence="1">Carbohydrate degradation; pentose phosphate pathway; D-glyceraldehyde 3-phosphate and beta-D-fructose 6-phosphate from D-ribose 5-phosphate and D-xylulose 5-phosphate (non-oxidative stage): step 2/3.</text>
</comment>
<comment type="subcellular location">
    <subcellularLocation>
        <location evidence="1">Cytoplasm</location>
    </subcellularLocation>
</comment>
<comment type="similarity">
    <text evidence="1">Belongs to the transaldolase family. Type 3B subfamily.</text>
</comment>
<reference key="1">
    <citation type="submission" date="2007-11" db="EMBL/GenBank/DDBJ databases">
        <title>Complete sequence of Petroga mobilis SJ95.</title>
        <authorList>
            <consortium name="US DOE Joint Genome Institute"/>
            <person name="Copeland A."/>
            <person name="Lucas S."/>
            <person name="Lapidus A."/>
            <person name="Barry K."/>
            <person name="Glavina del Rio T."/>
            <person name="Dalin E."/>
            <person name="Tice H."/>
            <person name="Pitluck S."/>
            <person name="Meincke L."/>
            <person name="Brettin T."/>
            <person name="Bruce D."/>
            <person name="Detter J.C."/>
            <person name="Han C."/>
            <person name="Kuske C.R."/>
            <person name="Schmutz J."/>
            <person name="Larimer F."/>
            <person name="Land M."/>
            <person name="Hauser L."/>
            <person name="Kyrpides N."/>
            <person name="Mikhailova N."/>
            <person name="Noll K."/>
            <person name="Richardson P."/>
        </authorList>
    </citation>
    <scope>NUCLEOTIDE SEQUENCE [LARGE SCALE GENOMIC DNA]</scope>
    <source>
        <strain>DSM 10674 / SJ95</strain>
    </source>
</reference>
<accession>A9BHK7</accession>
<evidence type="ECO:0000255" key="1">
    <source>
        <dbReference type="HAMAP-Rule" id="MF_00494"/>
    </source>
</evidence>